<proteinExistence type="inferred from homology"/>
<protein>
    <recommendedName>
        <fullName evidence="1">D-tagatose-1,6-bisphosphate aldolase subunit GatY</fullName>
        <shortName evidence="1">TBPA</shortName>
        <shortName evidence="1">TagBP aldolase</shortName>
        <ecNumber evidence="1">4.1.2.40</ecNumber>
    </recommendedName>
    <alternativeName>
        <fullName evidence="1">D-tagatose-bisphosphate aldolase class II</fullName>
    </alternativeName>
    <alternativeName>
        <fullName evidence="1">Tagatose-bisphosphate aldolase</fullName>
    </alternativeName>
</protein>
<evidence type="ECO:0000255" key="1">
    <source>
        <dbReference type="HAMAP-Rule" id="MF_01294"/>
    </source>
</evidence>
<keyword id="KW-0298">Galactitol metabolism</keyword>
<keyword id="KW-0456">Lyase</keyword>
<keyword id="KW-0479">Metal-binding</keyword>
<keyword id="KW-0862">Zinc</keyword>
<feature type="chain" id="PRO_1000140437" description="D-tagatose-1,6-bisphosphate aldolase subunit GatY">
    <location>
        <begin position="1"/>
        <end position="284"/>
    </location>
</feature>
<feature type="active site" description="Proton donor" evidence="1">
    <location>
        <position position="82"/>
    </location>
</feature>
<feature type="binding site" evidence="1">
    <location>
        <position position="83"/>
    </location>
    <ligand>
        <name>Zn(2+)</name>
        <dbReference type="ChEBI" id="CHEBI:29105"/>
        <note>catalytic</note>
    </ligand>
</feature>
<feature type="binding site" evidence="1">
    <location>
        <position position="180"/>
    </location>
    <ligand>
        <name>Zn(2+)</name>
        <dbReference type="ChEBI" id="CHEBI:29105"/>
        <note>catalytic</note>
    </ligand>
</feature>
<feature type="binding site" evidence="1">
    <location>
        <position position="181"/>
    </location>
    <ligand>
        <name>dihydroxyacetone phosphate</name>
        <dbReference type="ChEBI" id="CHEBI:57642"/>
    </ligand>
</feature>
<feature type="binding site" evidence="1">
    <location>
        <position position="208"/>
    </location>
    <ligand>
        <name>Zn(2+)</name>
        <dbReference type="ChEBI" id="CHEBI:29105"/>
        <note>catalytic</note>
    </ligand>
</feature>
<feature type="binding site" evidence="1">
    <location>
        <begin position="209"/>
        <end position="211"/>
    </location>
    <ligand>
        <name>dihydroxyacetone phosphate</name>
        <dbReference type="ChEBI" id="CHEBI:57642"/>
    </ligand>
</feature>
<feature type="binding site" evidence="1">
    <location>
        <begin position="230"/>
        <end position="233"/>
    </location>
    <ligand>
        <name>dihydroxyacetone phosphate</name>
        <dbReference type="ChEBI" id="CHEBI:57642"/>
    </ligand>
</feature>
<organism>
    <name type="scientific">Escherichia coli O7:K1 (strain IAI39 / ExPEC)</name>
    <dbReference type="NCBI Taxonomy" id="585057"/>
    <lineage>
        <taxon>Bacteria</taxon>
        <taxon>Pseudomonadati</taxon>
        <taxon>Pseudomonadota</taxon>
        <taxon>Gammaproteobacteria</taxon>
        <taxon>Enterobacterales</taxon>
        <taxon>Enterobacteriaceae</taxon>
        <taxon>Escherichia</taxon>
    </lineage>
</organism>
<accession>B7NPN7</accession>
<reference key="1">
    <citation type="journal article" date="2009" name="PLoS Genet.">
        <title>Organised genome dynamics in the Escherichia coli species results in highly diverse adaptive paths.</title>
        <authorList>
            <person name="Touchon M."/>
            <person name="Hoede C."/>
            <person name="Tenaillon O."/>
            <person name="Barbe V."/>
            <person name="Baeriswyl S."/>
            <person name="Bidet P."/>
            <person name="Bingen E."/>
            <person name="Bonacorsi S."/>
            <person name="Bouchier C."/>
            <person name="Bouvet O."/>
            <person name="Calteau A."/>
            <person name="Chiapello H."/>
            <person name="Clermont O."/>
            <person name="Cruveiller S."/>
            <person name="Danchin A."/>
            <person name="Diard M."/>
            <person name="Dossat C."/>
            <person name="Karoui M.E."/>
            <person name="Frapy E."/>
            <person name="Garry L."/>
            <person name="Ghigo J.M."/>
            <person name="Gilles A.M."/>
            <person name="Johnson J."/>
            <person name="Le Bouguenec C."/>
            <person name="Lescat M."/>
            <person name="Mangenot S."/>
            <person name="Martinez-Jehanne V."/>
            <person name="Matic I."/>
            <person name="Nassif X."/>
            <person name="Oztas S."/>
            <person name="Petit M.A."/>
            <person name="Pichon C."/>
            <person name="Rouy Z."/>
            <person name="Ruf C.S."/>
            <person name="Schneider D."/>
            <person name="Tourret J."/>
            <person name="Vacherie B."/>
            <person name="Vallenet D."/>
            <person name="Medigue C."/>
            <person name="Rocha E.P.C."/>
            <person name="Denamur E."/>
        </authorList>
    </citation>
    <scope>NUCLEOTIDE SEQUENCE [LARGE SCALE GENOMIC DNA]</scope>
    <source>
        <strain>IAI39 / ExPEC</strain>
    </source>
</reference>
<comment type="function">
    <text evidence="1">Catalytic subunit of the tagatose-1,6-bisphosphate aldolase GatYZ, which catalyzes the reversible aldol condensation of dihydroxyacetone phosphate (DHAP or glycerone-phosphate) with glyceraldehyde 3-phosphate (G3P) to produce tagatose 1,6-bisphosphate (TBP). Requires GatZ subunit for full activity and stability. Is involved in the catabolism of galactitol.</text>
</comment>
<comment type="catalytic activity">
    <reaction evidence="1">
        <text>D-tagatofuranose 1,6-bisphosphate = D-glyceraldehyde 3-phosphate + dihydroxyacetone phosphate</text>
        <dbReference type="Rhea" id="RHEA:22948"/>
        <dbReference type="ChEBI" id="CHEBI:57642"/>
        <dbReference type="ChEBI" id="CHEBI:58694"/>
        <dbReference type="ChEBI" id="CHEBI:59776"/>
        <dbReference type="EC" id="4.1.2.40"/>
    </reaction>
</comment>
<comment type="cofactor">
    <cofactor evidence="1">
        <name>Zn(2+)</name>
        <dbReference type="ChEBI" id="CHEBI:29105"/>
    </cofactor>
    <text evidence="1">Binds 1 zinc ion per subunit.</text>
</comment>
<comment type="pathway">
    <text evidence="1">Carbohydrate metabolism; D-tagatose 6-phosphate degradation; D-glyceraldehyde 3-phosphate and glycerone phosphate from D-tagatose 6-phosphate: step 2/2.</text>
</comment>
<comment type="subunit">
    <text evidence="1">Forms a complex with GatZ.</text>
</comment>
<comment type="similarity">
    <text evidence="1">Belongs to the class II fructose-bisphosphate aldolase family. TagBP aldolase GatY subfamily.</text>
</comment>
<sequence>MYVVSTKQMLNNAQRGGYAVPAFNIHNLETMQVVVETAASMHAPVIIAGTPGTFTHAGTENLMALVSAMAKQYHHPLAIHLDHHTKFDDIAQKVRSGVRSVMIDASHLPFAQNISRVKEVVDFCHRFDVSVEAELGQLGGQEDDVQVNEADAFYTNPAQAREFAEATGIDSLAVAIGTAHGMYASAPALDFSRLENIRQWVNLPLVLHGASGLSTKDIQQTIKLGICKINVATELKNAFSQALKNYLTEHPEATDPRDYLQSAKSAMRDVVSKVIADCGCEGRA</sequence>
<dbReference type="EC" id="4.1.2.40" evidence="1"/>
<dbReference type="EMBL" id="CU928164">
    <property type="protein sequence ID" value="CAR17058.1"/>
    <property type="molecule type" value="Genomic_DNA"/>
</dbReference>
<dbReference type="RefSeq" id="WP_000289799.1">
    <property type="nucleotide sequence ID" value="NC_011750.1"/>
</dbReference>
<dbReference type="RefSeq" id="YP_002406943.1">
    <property type="nucleotide sequence ID" value="NC_011750.1"/>
</dbReference>
<dbReference type="SMR" id="B7NPN7"/>
<dbReference type="STRING" id="585057.ECIAI39_0921"/>
<dbReference type="KEGG" id="ect:ECIAI39_0921"/>
<dbReference type="PATRIC" id="fig|585057.6.peg.971"/>
<dbReference type="HOGENOM" id="CLU_040088_0_1_6"/>
<dbReference type="UniPathway" id="UPA00704">
    <property type="reaction ID" value="UER00716"/>
</dbReference>
<dbReference type="Proteomes" id="UP000000749">
    <property type="component" value="Chromosome"/>
</dbReference>
<dbReference type="GO" id="GO:0005829">
    <property type="term" value="C:cytosol"/>
    <property type="evidence" value="ECO:0007669"/>
    <property type="project" value="TreeGrafter"/>
</dbReference>
<dbReference type="GO" id="GO:0009025">
    <property type="term" value="F:tagatose-bisphosphate aldolase activity"/>
    <property type="evidence" value="ECO:0007669"/>
    <property type="project" value="UniProtKB-UniRule"/>
</dbReference>
<dbReference type="GO" id="GO:0008270">
    <property type="term" value="F:zinc ion binding"/>
    <property type="evidence" value="ECO:0007669"/>
    <property type="project" value="UniProtKB-UniRule"/>
</dbReference>
<dbReference type="GO" id="GO:2001059">
    <property type="term" value="P:D-tagatose 6-phosphate catabolic process"/>
    <property type="evidence" value="ECO:0007669"/>
    <property type="project" value="UniProtKB-UniRule"/>
</dbReference>
<dbReference type="GO" id="GO:0019404">
    <property type="term" value="P:galactitol catabolic process"/>
    <property type="evidence" value="ECO:0007669"/>
    <property type="project" value="InterPro"/>
</dbReference>
<dbReference type="CDD" id="cd00947">
    <property type="entry name" value="TBP_aldolase_IIB"/>
    <property type="match status" value="1"/>
</dbReference>
<dbReference type="FunFam" id="3.20.20.70:FF:000043">
    <property type="entry name" value="D-tagatose-1,6-bisphosphate aldolase subunit GatY"/>
    <property type="match status" value="1"/>
</dbReference>
<dbReference type="Gene3D" id="3.20.20.70">
    <property type="entry name" value="Aldolase class I"/>
    <property type="match status" value="1"/>
</dbReference>
<dbReference type="HAMAP" id="MF_01294">
    <property type="entry name" value="TagBP_aldolase_GatY"/>
    <property type="match status" value="1"/>
</dbReference>
<dbReference type="InterPro" id="IPR013785">
    <property type="entry name" value="Aldolase_TIM"/>
</dbReference>
<dbReference type="InterPro" id="IPR050246">
    <property type="entry name" value="Class_II_FBP_aldolase"/>
</dbReference>
<dbReference type="InterPro" id="IPR000771">
    <property type="entry name" value="FBA_II"/>
</dbReference>
<dbReference type="InterPro" id="IPR011288">
    <property type="entry name" value="TagBP_ald_KbaY/GatY"/>
</dbReference>
<dbReference type="InterPro" id="IPR023955">
    <property type="entry name" value="TagBP_aldolase_GatY"/>
</dbReference>
<dbReference type="NCBIfam" id="TIGR00167">
    <property type="entry name" value="cbbA"/>
    <property type="match status" value="1"/>
</dbReference>
<dbReference type="NCBIfam" id="NF006626">
    <property type="entry name" value="PRK09195.1"/>
    <property type="match status" value="1"/>
</dbReference>
<dbReference type="NCBIfam" id="NF009374">
    <property type="entry name" value="PRK12737.1"/>
    <property type="match status" value="1"/>
</dbReference>
<dbReference type="NCBIfam" id="TIGR01858">
    <property type="entry name" value="tag_bisphos_ald"/>
    <property type="match status" value="1"/>
</dbReference>
<dbReference type="PANTHER" id="PTHR30304">
    <property type="entry name" value="D-TAGATOSE-1,6-BISPHOSPHATE ALDOLASE"/>
    <property type="match status" value="1"/>
</dbReference>
<dbReference type="PANTHER" id="PTHR30304:SF0">
    <property type="entry name" value="D-TAGATOSE-1,6-BISPHOSPHATE ALDOLASE SUBUNIT GATY-RELATED"/>
    <property type="match status" value="1"/>
</dbReference>
<dbReference type="Pfam" id="PF01116">
    <property type="entry name" value="F_bP_aldolase"/>
    <property type="match status" value="1"/>
</dbReference>
<dbReference type="PIRSF" id="PIRSF001359">
    <property type="entry name" value="F_bP_aldolase_II"/>
    <property type="match status" value="1"/>
</dbReference>
<dbReference type="SUPFAM" id="SSF51569">
    <property type="entry name" value="Aldolase"/>
    <property type="match status" value="1"/>
</dbReference>
<dbReference type="PROSITE" id="PS00602">
    <property type="entry name" value="ALDOLASE_CLASS_II_1"/>
    <property type="match status" value="1"/>
</dbReference>
<dbReference type="PROSITE" id="PS00806">
    <property type="entry name" value="ALDOLASE_CLASS_II_2"/>
    <property type="match status" value="1"/>
</dbReference>
<name>GATY_ECO7I</name>
<gene>
    <name evidence="1" type="primary">gatY</name>
    <name type="ordered locus">ECIAI39_0921</name>
</gene>